<protein>
    <recommendedName>
        <fullName evidence="1">Gamma-glutamyl phosphate reductase</fullName>
        <shortName evidence="1">GPR</shortName>
        <ecNumber evidence="1">1.2.1.41</ecNumber>
    </recommendedName>
    <alternativeName>
        <fullName evidence="1">Glutamate-5-semialdehyde dehydrogenase</fullName>
    </alternativeName>
    <alternativeName>
        <fullName evidence="1">Glutamyl-gamma-semialdehyde dehydrogenase</fullName>
        <shortName evidence="1">GSA dehydrogenase</shortName>
    </alternativeName>
</protein>
<evidence type="ECO:0000255" key="1">
    <source>
        <dbReference type="HAMAP-Rule" id="MF_00412"/>
    </source>
</evidence>
<organism>
    <name type="scientific">Methanosarcina mazei (strain ATCC BAA-159 / DSM 3647 / Goe1 / Go1 / JCM 11833 / OCM 88)</name>
    <name type="common">Methanosarcina frisia</name>
    <dbReference type="NCBI Taxonomy" id="192952"/>
    <lineage>
        <taxon>Archaea</taxon>
        <taxon>Methanobacteriati</taxon>
        <taxon>Methanobacteriota</taxon>
        <taxon>Stenosarchaea group</taxon>
        <taxon>Methanomicrobia</taxon>
        <taxon>Methanosarcinales</taxon>
        <taxon>Methanosarcinaceae</taxon>
        <taxon>Methanosarcina</taxon>
    </lineage>
</organism>
<sequence>MANDIESKVIKAKKASIELASVSSEVKNRALEAMAEALDKERKIILEANLKDLEYAAQLKKAGKLTQALVDRLKVTDSKVDGMIAGIRDVIKLKDPVGETLSTLELDDDLILYQVSCPIGLIGVIFESRPDVVPQVMSLCLKSGNATIFKGGSEARESNRTIFDILVRAIESTGGMPEGAFQLMETREEIMSLLSLDAYVDLLIPRGSNEFVKFIQDNTKIPVLGHTSGICHIYVDEFADPDTAWQVCFDAKVQYPAVCNAIETLLVNRNIAEVFLPKMAEMYLKAGVELRCDEGSYSLLSEKGLSPLSRATDEDWSLEYNDLILSIKLVDTIKEAVDHINTFGSHHTDGIITENASRRKEFIGLVDSSSVMVNASTRFADGYRYGKGAEVGISTNKIHSRGPVGMEGLLIYKYILMGKGQVVADYAGKNAKPYTHRKLDLKFEDVN</sequence>
<accession>Q8PYP2</accession>
<feature type="chain" id="PRO_0000189822" description="Gamma-glutamyl phosphate reductase">
    <location>
        <begin position="1"/>
        <end position="447"/>
    </location>
</feature>
<comment type="function">
    <text evidence="1">Catalyzes the NADPH-dependent reduction of L-glutamate 5-phosphate into L-glutamate 5-semialdehyde and phosphate. The product spontaneously undergoes cyclization to form 1-pyrroline-5-carboxylate.</text>
</comment>
<comment type="catalytic activity">
    <reaction evidence="1">
        <text>L-glutamate 5-semialdehyde + phosphate + NADP(+) = L-glutamyl 5-phosphate + NADPH + H(+)</text>
        <dbReference type="Rhea" id="RHEA:19541"/>
        <dbReference type="ChEBI" id="CHEBI:15378"/>
        <dbReference type="ChEBI" id="CHEBI:43474"/>
        <dbReference type="ChEBI" id="CHEBI:57783"/>
        <dbReference type="ChEBI" id="CHEBI:58066"/>
        <dbReference type="ChEBI" id="CHEBI:58274"/>
        <dbReference type="ChEBI" id="CHEBI:58349"/>
        <dbReference type="EC" id="1.2.1.41"/>
    </reaction>
</comment>
<comment type="pathway">
    <text evidence="1">Amino-acid biosynthesis; L-proline biosynthesis; L-glutamate 5-semialdehyde from L-glutamate: step 2/2.</text>
</comment>
<comment type="subcellular location">
    <subcellularLocation>
        <location evidence="1">Cytoplasm</location>
    </subcellularLocation>
</comment>
<comment type="similarity">
    <text evidence="1">Belongs to the gamma-glutamyl phosphate reductase family.</text>
</comment>
<proteinExistence type="inferred from homology"/>
<gene>
    <name evidence="1" type="primary">proA</name>
    <name type="ordered locus">MM_0819</name>
</gene>
<keyword id="KW-0028">Amino-acid biosynthesis</keyword>
<keyword id="KW-0963">Cytoplasm</keyword>
<keyword id="KW-0521">NADP</keyword>
<keyword id="KW-0560">Oxidoreductase</keyword>
<keyword id="KW-0641">Proline biosynthesis</keyword>
<name>PROA_METMA</name>
<dbReference type="EC" id="1.2.1.41" evidence="1"/>
<dbReference type="EMBL" id="AE008384">
    <property type="protein sequence ID" value="AAM30515.1"/>
    <property type="molecule type" value="Genomic_DNA"/>
</dbReference>
<dbReference type="RefSeq" id="WP_011032769.1">
    <property type="nucleotide sequence ID" value="NC_003901.1"/>
</dbReference>
<dbReference type="SMR" id="Q8PYP2"/>
<dbReference type="KEGG" id="mma:MM_0819"/>
<dbReference type="PATRIC" id="fig|192952.21.peg.971"/>
<dbReference type="eggNOG" id="arCOG01253">
    <property type="taxonomic scope" value="Archaea"/>
</dbReference>
<dbReference type="HOGENOM" id="CLU_030231_0_1_2"/>
<dbReference type="UniPathway" id="UPA00098">
    <property type="reaction ID" value="UER00360"/>
</dbReference>
<dbReference type="Proteomes" id="UP000000595">
    <property type="component" value="Chromosome"/>
</dbReference>
<dbReference type="GO" id="GO:0005737">
    <property type="term" value="C:cytoplasm"/>
    <property type="evidence" value="ECO:0007669"/>
    <property type="project" value="UniProtKB-SubCell"/>
</dbReference>
<dbReference type="GO" id="GO:0004350">
    <property type="term" value="F:glutamate-5-semialdehyde dehydrogenase activity"/>
    <property type="evidence" value="ECO:0007669"/>
    <property type="project" value="UniProtKB-UniRule"/>
</dbReference>
<dbReference type="GO" id="GO:0050661">
    <property type="term" value="F:NADP binding"/>
    <property type="evidence" value="ECO:0007669"/>
    <property type="project" value="InterPro"/>
</dbReference>
<dbReference type="GO" id="GO:0055129">
    <property type="term" value="P:L-proline biosynthetic process"/>
    <property type="evidence" value="ECO:0007669"/>
    <property type="project" value="UniProtKB-UniRule"/>
</dbReference>
<dbReference type="CDD" id="cd07079">
    <property type="entry name" value="ALDH_F18-19_ProA-GPR"/>
    <property type="match status" value="1"/>
</dbReference>
<dbReference type="FunFam" id="3.40.309.10:FF:000006">
    <property type="entry name" value="Gamma-glutamyl phosphate reductase"/>
    <property type="match status" value="1"/>
</dbReference>
<dbReference type="Gene3D" id="3.40.605.10">
    <property type="entry name" value="Aldehyde Dehydrogenase, Chain A, domain 1"/>
    <property type="match status" value="1"/>
</dbReference>
<dbReference type="Gene3D" id="3.40.309.10">
    <property type="entry name" value="Aldehyde Dehydrogenase, Chain A, domain 2"/>
    <property type="match status" value="1"/>
</dbReference>
<dbReference type="HAMAP" id="MF_00412">
    <property type="entry name" value="ProA"/>
    <property type="match status" value="1"/>
</dbReference>
<dbReference type="InterPro" id="IPR016161">
    <property type="entry name" value="Ald_DH/histidinol_DH"/>
</dbReference>
<dbReference type="InterPro" id="IPR016163">
    <property type="entry name" value="Ald_DH_C"/>
</dbReference>
<dbReference type="InterPro" id="IPR016162">
    <property type="entry name" value="Ald_DH_N"/>
</dbReference>
<dbReference type="InterPro" id="IPR015590">
    <property type="entry name" value="Aldehyde_DH_dom"/>
</dbReference>
<dbReference type="InterPro" id="IPR020593">
    <property type="entry name" value="G-glutamylP_reductase_CS"/>
</dbReference>
<dbReference type="InterPro" id="IPR012134">
    <property type="entry name" value="Glu-5-SA_DH"/>
</dbReference>
<dbReference type="InterPro" id="IPR000965">
    <property type="entry name" value="GPR_dom"/>
</dbReference>
<dbReference type="NCBIfam" id="NF001221">
    <property type="entry name" value="PRK00197.1"/>
    <property type="match status" value="1"/>
</dbReference>
<dbReference type="NCBIfam" id="TIGR00407">
    <property type="entry name" value="proA"/>
    <property type="match status" value="1"/>
</dbReference>
<dbReference type="PANTHER" id="PTHR11063:SF8">
    <property type="entry name" value="DELTA-1-PYRROLINE-5-CARBOXYLATE SYNTHASE"/>
    <property type="match status" value="1"/>
</dbReference>
<dbReference type="PANTHER" id="PTHR11063">
    <property type="entry name" value="GLUTAMATE SEMIALDEHYDE DEHYDROGENASE"/>
    <property type="match status" value="1"/>
</dbReference>
<dbReference type="Pfam" id="PF00171">
    <property type="entry name" value="Aldedh"/>
    <property type="match status" value="1"/>
</dbReference>
<dbReference type="PIRSF" id="PIRSF000151">
    <property type="entry name" value="GPR"/>
    <property type="match status" value="1"/>
</dbReference>
<dbReference type="SUPFAM" id="SSF53720">
    <property type="entry name" value="ALDH-like"/>
    <property type="match status" value="1"/>
</dbReference>
<dbReference type="PROSITE" id="PS01223">
    <property type="entry name" value="PROA"/>
    <property type="match status" value="1"/>
</dbReference>
<reference key="1">
    <citation type="journal article" date="2002" name="J. Mol. Microbiol. Biotechnol.">
        <title>The genome of Methanosarcina mazei: evidence for lateral gene transfer between Bacteria and Archaea.</title>
        <authorList>
            <person name="Deppenmeier U."/>
            <person name="Johann A."/>
            <person name="Hartsch T."/>
            <person name="Merkl R."/>
            <person name="Schmitz R.A."/>
            <person name="Martinez-Arias R."/>
            <person name="Henne A."/>
            <person name="Wiezer A."/>
            <person name="Baeumer S."/>
            <person name="Jacobi C."/>
            <person name="Brueggemann H."/>
            <person name="Lienard T."/>
            <person name="Christmann A."/>
            <person name="Boemecke M."/>
            <person name="Steckel S."/>
            <person name="Bhattacharyya A."/>
            <person name="Lykidis A."/>
            <person name="Overbeek R."/>
            <person name="Klenk H.-P."/>
            <person name="Gunsalus R.P."/>
            <person name="Fritz H.-J."/>
            <person name="Gottschalk G."/>
        </authorList>
    </citation>
    <scope>NUCLEOTIDE SEQUENCE [LARGE SCALE GENOMIC DNA]</scope>
    <source>
        <strain>ATCC BAA-159 / DSM 3647 / Goe1 / Go1 / JCM 11833 / OCM 88</strain>
    </source>
</reference>